<keyword id="KW-0046">Antibiotic resistance</keyword>
<keyword id="KW-1003">Cell membrane</keyword>
<keyword id="KW-0472">Membrane</keyword>
<keyword id="KW-0479">Metal-binding</keyword>
<keyword id="KW-1185">Reference proteome</keyword>
<keyword id="KW-0812">Transmembrane</keyword>
<keyword id="KW-1133">Transmembrane helix</keyword>
<keyword id="KW-0862">Zinc</keyword>
<keyword id="KW-0863">Zinc-finger</keyword>
<accession>Q2G2I1</accession>
<proteinExistence type="evidence at transcript level"/>
<evidence type="ECO:0000250" key="1"/>
<evidence type="ECO:0000255" key="2"/>
<evidence type="ECO:0000269" key="3">
    <source>
    </source>
</evidence>
<evidence type="ECO:0000269" key="4">
    <source>
    </source>
</evidence>
<evidence type="ECO:0000269" key="5">
    <source>
    </source>
</evidence>
<evidence type="ECO:0000305" key="6"/>
<gene>
    <name type="primary">tcaA</name>
    <name type="ordered locus">SAOUHSC_02635</name>
</gene>
<organism>
    <name type="scientific">Staphylococcus aureus (strain NCTC 8325 / PS 47)</name>
    <dbReference type="NCBI Taxonomy" id="93061"/>
    <lineage>
        <taxon>Bacteria</taxon>
        <taxon>Bacillati</taxon>
        <taxon>Bacillota</taxon>
        <taxon>Bacilli</taxon>
        <taxon>Bacillales</taxon>
        <taxon>Staphylococcaceae</taxon>
        <taxon>Staphylococcus</taxon>
    </lineage>
</organism>
<dbReference type="EMBL" id="CP000253">
    <property type="protein sequence ID" value="ABD31644.1"/>
    <property type="molecule type" value="Genomic_DNA"/>
</dbReference>
<dbReference type="RefSeq" id="WP_000833797.1">
    <property type="nucleotide sequence ID" value="NZ_LS483365.1"/>
</dbReference>
<dbReference type="RefSeq" id="YP_501096.1">
    <property type="nucleotide sequence ID" value="NC_007795.1"/>
</dbReference>
<dbReference type="STRING" id="93061.SAOUHSC_02635"/>
<dbReference type="PaxDb" id="1280-SAXN108_2607"/>
<dbReference type="GeneID" id="3921412"/>
<dbReference type="KEGG" id="sao:SAOUHSC_02635"/>
<dbReference type="PATRIC" id="fig|93061.5.peg.2383"/>
<dbReference type="eggNOG" id="COG4640">
    <property type="taxonomic scope" value="Bacteria"/>
</dbReference>
<dbReference type="HOGENOM" id="CLU_047245_0_0_9"/>
<dbReference type="OrthoDB" id="2416352at2"/>
<dbReference type="PRO" id="PR:Q2G2I1"/>
<dbReference type="Proteomes" id="UP000008816">
    <property type="component" value="Chromosome"/>
</dbReference>
<dbReference type="GO" id="GO:0005886">
    <property type="term" value="C:plasma membrane"/>
    <property type="evidence" value="ECO:0007669"/>
    <property type="project" value="UniProtKB-SubCell"/>
</dbReference>
<dbReference type="GO" id="GO:0008270">
    <property type="term" value="F:zinc ion binding"/>
    <property type="evidence" value="ECO:0007669"/>
    <property type="project" value="UniProtKB-KW"/>
</dbReference>
<dbReference type="GO" id="GO:0046677">
    <property type="term" value="P:response to antibiotic"/>
    <property type="evidence" value="ECO:0007669"/>
    <property type="project" value="UniProtKB-KW"/>
</dbReference>
<dbReference type="InterPro" id="IPR023599">
    <property type="entry name" value="Mem_prot_TcaA"/>
</dbReference>
<dbReference type="InterPro" id="IPR054529">
    <property type="entry name" value="TcaA_2nd"/>
</dbReference>
<dbReference type="InterPro" id="IPR054530">
    <property type="entry name" value="TcaA_4th"/>
</dbReference>
<dbReference type="PANTHER" id="PTHR40038">
    <property type="entry name" value="MEMBRANE-ASSOCIATED PROTEIN TCAA"/>
    <property type="match status" value="1"/>
</dbReference>
<dbReference type="PANTHER" id="PTHR40038:SF1">
    <property type="entry name" value="MEMBRANE-ASSOCIATED PROTEIN TCAA"/>
    <property type="match status" value="1"/>
</dbReference>
<dbReference type="Pfam" id="PF22813">
    <property type="entry name" value="TcaA_2nd"/>
    <property type="match status" value="1"/>
</dbReference>
<dbReference type="Pfam" id="PF22820">
    <property type="entry name" value="TcaA_3rd_4th"/>
    <property type="match status" value="1"/>
</dbReference>
<dbReference type="Pfam" id="PF22819">
    <property type="entry name" value="TcaA_5th"/>
    <property type="match status" value="1"/>
</dbReference>
<dbReference type="PIRSF" id="PIRSF032522">
    <property type="entry name" value="TcaA"/>
    <property type="match status" value="1"/>
</dbReference>
<sequence>MKSCPKCGQQAQDDVQICTQCGHKFDSRQALYRKSTDEDIQTNNIKMRKMVPWAIGFFILILIIILFFLLRNFNSPEAQTKILVNAIENNDKQKVATLLSTKDNKVDSEEAKVYINYIKDEVGLKQFVSDLKNTVHKLNKSKTSVASYIQTRSGQNILRVSKNGTRYIFFDNMSFTAPTKQPIVKPKEKTKYEFKSGGKKKMVIAEANKVTPIGNFIPGTYRIPAMKSTENGDFAGHLKFDFRQSNSETVDVTEDFEEANISVTLKGDTKLNDSSKKVTINDHEMAFSSSKTYGPYPQNKDITISASGKAKDKTFTTQTKTIKASDLKYNTEITLNFDSEDIEDYVEKKEKEENSLKNKLIEFFAGYSLANNAAFNQSDFDFVSSYIKKGSSFYDDVKKRVSKGSLMMISSPQIIDAEKHGDKITATVRLINENGKQVDKEYELEQGSQDRLQLIKTSEK</sequence>
<reference key="1">
    <citation type="book" date="2006" name="Gram positive pathogens, 2nd edition">
        <title>The Staphylococcus aureus NCTC 8325 genome.</title>
        <editorList>
            <person name="Fischetti V."/>
            <person name="Novick R."/>
            <person name="Ferretti J."/>
            <person name="Portnoy D."/>
            <person name="Rood J."/>
        </editorList>
        <authorList>
            <person name="Gillaspy A.F."/>
            <person name="Worrell V."/>
            <person name="Orvis J."/>
            <person name="Roe B.A."/>
            <person name="Dyer D.W."/>
            <person name="Iandolo J.J."/>
        </authorList>
    </citation>
    <scope>NUCLEOTIDE SEQUENCE [LARGE SCALE GENOMIC DNA]</scope>
    <source>
        <strain>NCTC 8325 / PS 47</strain>
    </source>
</reference>
<reference key="2">
    <citation type="journal article" date="2000" name="Biochim. Biophys. Acta">
        <title>Inactivation of a novel three-cistronic operon tcaR-tcaA-tcaB increases teicoplanin resistance in Staphylococcus aureus.</title>
        <authorList>
            <person name="Brandenberger M."/>
            <person name="Tschierske M."/>
            <person name="Giachino P."/>
            <person name="Wada A."/>
            <person name="Berger-Baechi B."/>
        </authorList>
    </citation>
    <scope>FUNCTION</scope>
    <scope>DISRUPTION PHENOTYPE</scope>
</reference>
<reference key="3">
    <citation type="journal article" date="2004" name="Antimicrob. Agents Chemother.">
        <title>TcaA inactivation increases glycopeptide resistance in Staphylococcus aureus.</title>
        <authorList>
            <person name="Maki H."/>
            <person name="McCallum N."/>
            <person name="Bischoff M."/>
            <person name="Wada A."/>
            <person name="Berger-Baechi B."/>
        </authorList>
    </citation>
    <scope>FUNCTION</scope>
    <scope>DISRUPTION PHENOTYPE</scope>
</reference>
<reference key="4">
    <citation type="journal article" date="2006" name="Biochim. Biophys. Acta">
        <title>Strain dependence of the cell wall-damage induced stimulon in Staphylococcus aureus.</title>
        <authorList>
            <person name="McCallum N."/>
            <person name="Spehar G."/>
            <person name="Bischoff M."/>
            <person name="Berger-Bachi B."/>
        </authorList>
    </citation>
    <scope>INDUCTION</scope>
</reference>
<feature type="chain" id="PRO_0000333169" description="Membrane-associated protein TcaA">
    <location>
        <begin position="1"/>
        <end position="460"/>
    </location>
</feature>
<feature type="topological domain" description="Cytoplasmic" evidence="2">
    <location>
        <begin position="1"/>
        <end position="49"/>
    </location>
</feature>
<feature type="transmembrane region" description="Helical" evidence="2">
    <location>
        <begin position="50"/>
        <end position="70"/>
    </location>
</feature>
<feature type="topological domain" description="Extracellular" evidence="2">
    <location>
        <begin position="71"/>
        <end position="460"/>
    </location>
</feature>
<feature type="zinc finger region" description="C4-type" evidence="2">
    <location>
        <begin position="4"/>
        <end position="21"/>
    </location>
</feature>
<protein>
    <recommendedName>
        <fullName>Membrane-associated protein TcaA</fullName>
    </recommendedName>
</protein>
<comment type="function">
    <text evidence="3 4">Plays a major role in decreasing resistance to glycopeptide antibiotics.</text>
</comment>
<comment type="subcellular location">
    <subcellularLocation>
        <location evidence="1">Cell membrane</location>
        <topology evidence="1">Single-pass membrane protein</topology>
    </subcellularLocation>
</comment>
<comment type="induction">
    <text evidence="5">Strongly induced by teicoplanin, vancomycin and oxacillin in strain RN4220, a restriction defective laboratory strain derived from NCTC 8325.</text>
</comment>
<comment type="disruption phenotype">
    <text evidence="3 4">Increased in resistance against glycopeptide antibiotics, especially teicoplanin. The resistance phenotype is lowered by several folds in strains carrying mutations in the rsbU gene which codes for a positive regulator of sigma-B.</text>
</comment>
<comment type="similarity">
    <text evidence="6">Belongs to the TcaA family.</text>
</comment>
<name>TCAA_STAA8</name>